<comment type="function">
    <text evidence="1">Catalyzes the hydrolysis of UDP-3-O-myristoyl-N-acetylglucosamine to form UDP-3-O-myristoylglucosamine and acetate, the committed step in lipid A biosynthesis.</text>
</comment>
<comment type="catalytic activity">
    <reaction evidence="1">
        <text>a UDP-3-O-[(3R)-3-hydroxyacyl]-N-acetyl-alpha-D-glucosamine + H2O = a UDP-3-O-[(3R)-3-hydroxyacyl]-alpha-D-glucosamine + acetate</text>
        <dbReference type="Rhea" id="RHEA:67816"/>
        <dbReference type="ChEBI" id="CHEBI:15377"/>
        <dbReference type="ChEBI" id="CHEBI:30089"/>
        <dbReference type="ChEBI" id="CHEBI:137740"/>
        <dbReference type="ChEBI" id="CHEBI:173225"/>
        <dbReference type="EC" id="3.5.1.108"/>
    </reaction>
</comment>
<comment type="cofactor">
    <cofactor evidence="1">
        <name>Zn(2+)</name>
        <dbReference type="ChEBI" id="CHEBI:29105"/>
    </cofactor>
</comment>
<comment type="pathway">
    <text evidence="1">Glycolipid biosynthesis; lipid IV(A) biosynthesis; lipid IV(A) from (3R)-3-hydroxytetradecanoyl-[acyl-carrier-protein] and UDP-N-acetyl-alpha-D-glucosamine: step 2/6.</text>
</comment>
<comment type="similarity">
    <text evidence="1">Belongs to the LpxC family.</text>
</comment>
<dbReference type="EC" id="3.5.1.108" evidence="1"/>
<dbReference type="EMBL" id="CP000768">
    <property type="protein sequence ID" value="ABS43647.1"/>
    <property type="molecule type" value="Genomic_DNA"/>
</dbReference>
<dbReference type="SMR" id="A7H1L1"/>
<dbReference type="KEGG" id="cjd:JJD26997_0145"/>
<dbReference type="HOGENOM" id="CLU_046528_1_0_7"/>
<dbReference type="UniPathway" id="UPA00359">
    <property type="reaction ID" value="UER00478"/>
</dbReference>
<dbReference type="Proteomes" id="UP000002302">
    <property type="component" value="Chromosome"/>
</dbReference>
<dbReference type="GO" id="GO:0016020">
    <property type="term" value="C:membrane"/>
    <property type="evidence" value="ECO:0007669"/>
    <property type="project" value="GOC"/>
</dbReference>
<dbReference type="GO" id="GO:0046872">
    <property type="term" value="F:metal ion binding"/>
    <property type="evidence" value="ECO:0007669"/>
    <property type="project" value="UniProtKB-KW"/>
</dbReference>
<dbReference type="GO" id="GO:0103117">
    <property type="term" value="F:UDP-3-O-acyl-N-acetylglucosamine deacetylase activity"/>
    <property type="evidence" value="ECO:0007669"/>
    <property type="project" value="UniProtKB-UniRule"/>
</dbReference>
<dbReference type="GO" id="GO:0009245">
    <property type="term" value="P:lipid A biosynthetic process"/>
    <property type="evidence" value="ECO:0007669"/>
    <property type="project" value="UniProtKB-UniRule"/>
</dbReference>
<dbReference type="Gene3D" id="3.30.230.20">
    <property type="entry name" value="lpxc deacetylase, domain 1"/>
    <property type="match status" value="1"/>
</dbReference>
<dbReference type="Gene3D" id="3.30.1700.10">
    <property type="entry name" value="lpxc deacetylase, domain 2"/>
    <property type="match status" value="1"/>
</dbReference>
<dbReference type="HAMAP" id="MF_00388">
    <property type="entry name" value="LpxC"/>
    <property type="match status" value="1"/>
</dbReference>
<dbReference type="InterPro" id="IPR020568">
    <property type="entry name" value="Ribosomal_Su5_D2-typ_SF"/>
</dbReference>
<dbReference type="InterPro" id="IPR004463">
    <property type="entry name" value="UDP-acyl_GlcNac_deAcase"/>
</dbReference>
<dbReference type="InterPro" id="IPR011334">
    <property type="entry name" value="UDP-acyl_GlcNac_deAcase_C"/>
</dbReference>
<dbReference type="InterPro" id="IPR015870">
    <property type="entry name" value="UDP-acyl_N-AcGlcN_deAcase_N"/>
</dbReference>
<dbReference type="NCBIfam" id="TIGR00325">
    <property type="entry name" value="lpxC"/>
    <property type="match status" value="1"/>
</dbReference>
<dbReference type="PANTHER" id="PTHR33694">
    <property type="entry name" value="UDP-3-O-ACYL-N-ACETYLGLUCOSAMINE DEACETYLASE 1, MITOCHONDRIAL-RELATED"/>
    <property type="match status" value="1"/>
</dbReference>
<dbReference type="PANTHER" id="PTHR33694:SF1">
    <property type="entry name" value="UDP-3-O-ACYL-N-ACETYLGLUCOSAMINE DEACETYLASE 1, MITOCHONDRIAL-RELATED"/>
    <property type="match status" value="1"/>
</dbReference>
<dbReference type="Pfam" id="PF03331">
    <property type="entry name" value="LpxC"/>
    <property type="match status" value="1"/>
</dbReference>
<dbReference type="SUPFAM" id="SSF54211">
    <property type="entry name" value="Ribosomal protein S5 domain 2-like"/>
    <property type="match status" value="2"/>
</dbReference>
<reference key="1">
    <citation type="submission" date="2007-07" db="EMBL/GenBank/DDBJ databases">
        <title>Complete genome sequence of Campylobacter jejuni subsp doylei 269.97 isolated from human blood.</title>
        <authorList>
            <person name="Fouts D.E."/>
            <person name="Mongodin E.F."/>
            <person name="Puiu D."/>
            <person name="Sebastian Y."/>
            <person name="Miller W.G."/>
            <person name="Mandrell R.E."/>
            <person name="Lastovica A.J."/>
            <person name="Nelson K.E."/>
        </authorList>
    </citation>
    <scope>NUCLEOTIDE SEQUENCE [LARGE SCALE GENOMIC DNA]</scope>
    <source>
        <strain>ATCC BAA-1458 / RM4099 / 269.97</strain>
    </source>
</reference>
<proteinExistence type="inferred from homology"/>
<protein>
    <recommendedName>
        <fullName evidence="1">UDP-3-O-acyl-N-acetylglucosamine deacetylase</fullName>
        <shortName evidence="1">UDP-3-O-acyl-GlcNAc deacetylase</shortName>
        <ecNumber evidence="1">3.5.1.108</ecNumber>
    </recommendedName>
    <alternativeName>
        <fullName evidence="1">UDP-3-O-[R-3-hydroxymyristoyl]-N-acetylglucosamine deacetylase</fullName>
    </alternativeName>
</protein>
<accession>A7H1L1</accession>
<organism>
    <name type="scientific">Campylobacter jejuni subsp. doylei (strain ATCC BAA-1458 / RM4099 / 269.97)</name>
    <dbReference type="NCBI Taxonomy" id="360109"/>
    <lineage>
        <taxon>Bacteria</taxon>
        <taxon>Pseudomonadati</taxon>
        <taxon>Campylobacterota</taxon>
        <taxon>Epsilonproteobacteria</taxon>
        <taxon>Campylobacterales</taxon>
        <taxon>Campylobacteraceae</taxon>
        <taxon>Campylobacter</taxon>
    </lineage>
</organism>
<feature type="chain" id="PRO_1000013202" description="UDP-3-O-acyl-N-acetylglucosamine deacetylase">
    <location>
        <begin position="1"/>
        <end position="294"/>
    </location>
</feature>
<feature type="active site" description="Proton donor" evidence="1">
    <location>
        <position position="259"/>
    </location>
</feature>
<feature type="binding site" evidence="1">
    <location>
        <position position="75"/>
    </location>
    <ligand>
        <name>Zn(2+)</name>
        <dbReference type="ChEBI" id="CHEBI:29105"/>
    </ligand>
</feature>
<feature type="binding site" evidence="1">
    <location>
        <position position="232"/>
    </location>
    <ligand>
        <name>Zn(2+)</name>
        <dbReference type="ChEBI" id="CHEBI:29105"/>
    </ligand>
</feature>
<feature type="binding site" evidence="1">
    <location>
        <position position="236"/>
    </location>
    <ligand>
        <name>Zn(2+)</name>
        <dbReference type="ChEBI" id="CHEBI:29105"/>
    </ligand>
</feature>
<keyword id="KW-0378">Hydrolase</keyword>
<keyword id="KW-0441">Lipid A biosynthesis</keyword>
<keyword id="KW-0444">Lipid biosynthesis</keyword>
<keyword id="KW-0443">Lipid metabolism</keyword>
<keyword id="KW-0479">Metal-binding</keyword>
<keyword id="KW-0862">Zinc</keyword>
<sequence>MKQLTLVKTVKGVGIGLHKGEPIEITLEPLEANSGIVFFRSDLNASYKASPENVINTQMATVLGDDRGFISTIEHLMSAINAYGIDNVRIVLNANEAPVMDGSSISFCMMLDEAGVKELDAPKKIMVIKKPIEVRDGNKFVRLTPTKEPRINYTIKFDNAVIGEQSYNFEFSKKNYIENIARARTFGFLKDVQALRSMNLALGGSLENTIVVDENRILNPEGLRFKDEFVRHKILDAIGDLTLLGYRVFGDYTSYAGSHHLNHLLTKEVLKDKDAYEIVSLEKTTQKAYEKVFA</sequence>
<evidence type="ECO:0000255" key="1">
    <source>
        <dbReference type="HAMAP-Rule" id="MF_00388"/>
    </source>
</evidence>
<gene>
    <name evidence="1" type="primary">lpxC</name>
    <name type="ordered locus">JJD26997_0145</name>
</gene>
<name>LPXC_CAMJD</name>